<gene>
    <name type="primary">F</name>
</gene>
<organism>
    <name type="scientific">Phocine distemper virus</name>
    <name type="common">PDV</name>
    <dbReference type="NCBI Taxonomy" id="11240"/>
    <lineage>
        <taxon>Viruses</taxon>
        <taxon>Riboviria</taxon>
        <taxon>Orthornavirae</taxon>
        <taxon>Negarnaviricota</taxon>
        <taxon>Haploviricotina</taxon>
        <taxon>Monjiviricetes</taxon>
        <taxon>Mononegavirales</taxon>
        <taxon>Paramyxoviridae</taxon>
        <taxon>Orthoparamyxovirinae</taxon>
        <taxon>Morbillivirus</taxon>
        <taxon>Morbillivirus phocae</taxon>
    </lineage>
</organism>
<sequence>MVILVHCVMGQIHWTNLSTIGIIGTDSSHYKIMTRSSHQYLVLKLMPNVSIIDNCTKAELDEYEKLLNSVLEPINQALTLMTKNVKSLQSLGSGRRQRRFAGVVIAGAALGVATAAQITAGVALYQSNLNAQAIQSLRASLEQSNKAIDEVRQASQNIIIAVQGVQDYVNNEIVPALQHMSCELIGQRLGLKLLRYYTELLSVFGPSLRDPISAEISIQALSYALGGEIHKILEKLGYSGNDMVAILETKGIRAKITHVDLSGKFIVLSISYPTLSEVKGVVVHRLEAVSYNIGSQEWYTTVPRYVATNGYLISNFDESSCVFVSESAICSQNSLYPMSPILQQCLRGETASCARTLVSGTLGNKFILSKGNIIANCASILCKCHSTSKIINQSPDKLLTFIASDTCSLVEIDGVTIQVGSRQYPDVVYASKVILGPAISLERLDVGTNLGSALKKLDDAKVLIESSDQILDTVKNSYLSLGTLIALPVSIGLGLILLLLICCCKKRYQHLFSQSTKVAPVFKPDLTGTSKSYVRSL</sequence>
<reference key="1">
    <citation type="journal article" date="1991" name="J. Gen. Virol.">
        <title>The nucleotide sequence and deduced amino acid composition of the haemagglutinin and fusion proteins of the morbillivirus phocid distemper virus.</title>
        <authorList>
            <person name="Koevamees J."/>
            <person name="Blixenkrone-Moeller M."/>
            <person name="Sharma B."/>
            <person name="Oervell C."/>
            <person name="Norrby E."/>
        </authorList>
    </citation>
    <scope>NUCLEOTIDE SEQUENCE [GENOMIC RNA]</scope>
    <source>
        <strain>Isolate DK88-4A</strain>
    </source>
</reference>
<reference key="2">
    <citation type="journal article" date="1992" name="Arch. Virol.">
        <title>The fusion protein gene of phocine distemper virus: nucleotide and deduced amino acid sequences and a comparison of morbillivirus fusion proteins.</title>
        <authorList>
            <person name="Curran M.D."/>
            <person name="Lu Y.J."/>
            <person name="Rima B.K."/>
        </authorList>
    </citation>
    <scope>NUCLEOTIDE SEQUENCE [GENOMIC RNA]</scope>
    <source>
        <strain>Ulster/88</strain>
    </source>
</reference>
<reference key="3">
    <citation type="journal article" date="1990" name="Vet. Rec.">
        <title>Nucleotide sequence analysis of phocine distemper virus reveals its distinctness from canine distemper virus.</title>
        <authorList>
            <person name="Curran M.D."/>
            <person name="O'Loan D."/>
            <person name="Rima B.K."/>
            <person name="Kennedy S."/>
        </authorList>
    </citation>
    <scope>NUCLEOTIDE SEQUENCE [GENOMIC RNA]</scope>
    <source>
        <strain>Ulster/88</strain>
    </source>
</reference>
<dbReference type="EMBL" id="D10371">
    <property type="protein sequence ID" value="BAA01206.1"/>
    <property type="status" value="ALT_INIT"/>
    <property type="molecule type" value="Genomic_RNA"/>
</dbReference>
<dbReference type="PIR" id="A48346">
    <property type="entry name" value="A48346"/>
</dbReference>
<dbReference type="PIR" id="JQ1368">
    <property type="entry name" value="VGNZPD"/>
</dbReference>
<dbReference type="SMR" id="P28886"/>
<dbReference type="GlyCosmos" id="P28886">
    <property type="glycosylation" value="3 sites, No reported glycans"/>
</dbReference>
<dbReference type="GO" id="GO:0020002">
    <property type="term" value="C:host cell plasma membrane"/>
    <property type="evidence" value="ECO:0007669"/>
    <property type="project" value="UniProtKB-SubCell"/>
</dbReference>
<dbReference type="GO" id="GO:0016020">
    <property type="term" value="C:membrane"/>
    <property type="evidence" value="ECO:0007669"/>
    <property type="project" value="UniProtKB-KW"/>
</dbReference>
<dbReference type="GO" id="GO:0019031">
    <property type="term" value="C:viral envelope"/>
    <property type="evidence" value="ECO:0007669"/>
    <property type="project" value="UniProtKB-KW"/>
</dbReference>
<dbReference type="GO" id="GO:0055036">
    <property type="term" value="C:virion membrane"/>
    <property type="evidence" value="ECO:0007669"/>
    <property type="project" value="UniProtKB-SubCell"/>
</dbReference>
<dbReference type="GO" id="GO:0019064">
    <property type="term" value="P:fusion of virus membrane with host plasma membrane"/>
    <property type="evidence" value="ECO:0007669"/>
    <property type="project" value="UniProtKB-KW"/>
</dbReference>
<dbReference type="GO" id="GO:0046718">
    <property type="term" value="P:symbiont entry into host cell"/>
    <property type="evidence" value="ECO:0007669"/>
    <property type="project" value="UniProtKB-KW"/>
</dbReference>
<dbReference type="Gene3D" id="1.10.287.2480">
    <property type="match status" value="1"/>
</dbReference>
<dbReference type="Gene3D" id="6.10.10.110">
    <property type="match status" value="1"/>
</dbReference>
<dbReference type="Gene3D" id="2.60.40.1690">
    <property type="entry name" value="Head and neck region of the ectodomain of NDV fusion glycoprotein"/>
    <property type="match status" value="1"/>
</dbReference>
<dbReference type="Gene3D" id="2.40.490.10">
    <property type="entry name" value="Newcastle disease virus like domain"/>
    <property type="match status" value="1"/>
</dbReference>
<dbReference type="InterPro" id="IPR000776">
    <property type="entry name" value="Fusion_F0_Paramyxovir"/>
</dbReference>
<dbReference type="Pfam" id="PF00523">
    <property type="entry name" value="Fusion_gly"/>
    <property type="match status" value="1"/>
</dbReference>
<dbReference type="SUPFAM" id="SSF69922">
    <property type="entry name" value="Head and neck region of the ectodomain of NDV fusion glycoprotein"/>
    <property type="match status" value="1"/>
</dbReference>
<dbReference type="SUPFAM" id="SSF58069">
    <property type="entry name" value="Virus ectodomain"/>
    <property type="match status" value="1"/>
</dbReference>
<keyword id="KW-0165">Cleavage on pair of basic residues</keyword>
<keyword id="KW-0175">Coiled coil</keyword>
<keyword id="KW-1015">Disulfide bond</keyword>
<keyword id="KW-1169">Fusion of virus membrane with host cell membrane</keyword>
<keyword id="KW-1168">Fusion of virus membrane with host membrane</keyword>
<keyword id="KW-0325">Glycoprotein</keyword>
<keyword id="KW-1032">Host cell membrane</keyword>
<keyword id="KW-1043">Host membrane</keyword>
<keyword id="KW-0472">Membrane</keyword>
<keyword id="KW-0732">Signal</keyword>
<keyword id="KW-0812">Transmembrane</keyword>
<keyword id="KW-1133">Transmembrane helix</keyword>
<keyword id="KW-0261">Viral envelope protein</keyword>
<keyword id="KW-1162">Viral penetration into host cytoplasm</keyword>
<keyword id="KW-0946">Virion</keyword>
<keyword id="KW-1160">Virus entry into host cell</keyword>
<feature type="signal peptide" evidence="3">
    <location>
        <begin position="1"/>
        <end position="10"/>
    </location>
</feature>
<feature type="chain" id="PRO_0000039329" description="Fusion glycoprotein F0">
    <location>
        <begin position="11"/>
        <end position="537"/>
    </location>
</feature>
<feature type="chain" id="PRO_0000039327" description="Fusion glycoprotein F2">
    <location>
        <begin position="11"/>
        <end position="99"/>
    </location>
</feature>
<feature type="chain" id="PRO_0000039328" description="Fusion glycoprotein F1">
    <location>
        <begin position="100"/>
        <end position="537"/>
    </location>
</feature>
<feature type="topological domain" description="Extracellular" evidence="1">
    <location>
        <begin position="11"/>
        <end position="483"/>
    </location>
</feature>
<feature type="transmembrane region" description="Helical" evidence="3">
    <location>
        <begin position="484"/>
        <end position="504"/>
    </location>
</feature>
<feature type="topological domain" description="Cytoplasmic" evidence="1">
    <location>
        <begin position="505"/>
        <end position="537"/>
    </location>
</feature>
<feature type="region of interest" description="Fusion peptide" evidence="1">
    <location>
        <begin position="100"/>
        <end position="124"/>
    </location>
</feature>
<feature type="coiled-coil region" evidence="3">
    <location>
        <begin position="125"/>
        <end position="153"/>
    </location>
</feature>
<feature type="coiled-coil region" evidence="3">
    <location>
        <begin position="449"/>
        <end position="474"/>
    </location>
</feature>
<feature type="site" description="Cleavage; by host" evidence="1">
    <location>
        <begin position="99"/>
        <end position="100"/>
    </location>
</feature>
<feature type="glycosylation site" description="N-linked (GlcNAc...) asparagine; by host" evidence="2">
    <location>
        <position position="16"/>
    </location>
</feature>
<feature type="glycosylation site" description="N-linked (GlcNAc...) asparagine; by host" evidence="2">
    <location>
        <position position="48"/>
    </location>
</feature>
<feature type="glycosylation site" description="N-linked (GlcNAc...) asparagine; by host" evidence="3">
    <location>
        <position position="54"/>
    </location>
</feature>
<feature type="disulfide bond" description="Interchain (with C-195)" evidence="2">
    <location>
        <position position="55"/>
    </location>
</feature>
<feature type="disulfide bond" description="Interchain (with C-68)" evidence="2">
    <location>
        <position position="182"/>
    </location>
</feature>
<feature type="disulfide bond" evidence="2">
    <location>
        <begin position="321"/>
        <end position="330"/>
    </location>
</feature>
<feature type="disulfide bond" evidence="2">
    <location>
        <begin position="345"/>
        <end position="353"/>
    </location>
</feature>
<feature type="disulfide bond" evidence="2">
    <location>
        <begin position="377"/>
        <end position="382"/>
    </location>
</feature>
<feature type="disulfide bond" evidence="2">
    <location>
        <begin position="384"/>
        <end position="407"/>
    </location>
</feature>
<accession>P28886</accession>
<comment type="function">
    <text evidence="1">Class I viral fusion protein. Under the current model, the protein has at least 3 conformational states: pre-fusion native state, pre-hairpin intermediate state, and post-fusion hairpin state. During viral and plasma cell membrane fusion, the heptad repeat (HR) regions assume a trimer-of-hairpins structure, positioning the fusion peptide in close proximity to the C-terminal region of the ectodomain. The formation of this structure appears to drive apposition and subsequent fusion of viral and plasma cell membranes. Directs fusion of viral and cellular membranes leading to delivery of the nucleocapsid into the cytoplasm. This fusion is pH independent and occurs directly at the outer cell membrane. The trimer of F1-F2 (F protein) probably interacts with H at the virion surface. Upon HN binding to its cellular receptor, the hydrophobic fusion peptide is unmasked and interacts with the cellular membrane, inducing the fusion between cell and virion membranes. Later in infection, F proteins expressed at the plasma membrane of infected cells could mediate fusion with adjacent cells to form syncytia, a cytopathic effect that could lead to tissue necrosis (By similarity).</text>
</comment>
<comment type="subunit">
    <text evidence="1">Homotrimer of disulfide-linked F1-F2.</text>
</comment>
<comment type="subcellular location">
    <subcellularLocation>
        <location evidence="1">Virion membrane</location>
        <topology evidence="1">Single-pass type I membrane protein</topology>
    </subcellularLocation>
    <subcellularLocation>
        <location evidence="1">Host cell membrane</location>
        <topology evidence="1">Single-pass membrane protein</topology>
    </subcellularLocation>
</comment>
<comment type="PTM">
    <text evidence="1">The inactive precursor F0 is glycosylated and proteolytically cleaved into F1 and F2 to be functionally active. The cleavage is mediated by cellular proteases during the transport and maturation of the polypeptide (By similarity).</text>
</comment>
<comment type="similarity">
    <text evidence="4">Belongs to the paramyxoviruses fusion glycoprotein family.</text>
</comment>
<comment type="sequence caution" evidence="4">
    <conflict type="erroneous initiation">
        <sequence resource="EMBL-CDS" id="BAA01206"/>
    </conflict>
</comment>
<proteinExistence type="inferred from homology"/>
<protein>
    <recommendedName>
        <fullName>Fusion glycoprotein F0</fullName>
    </recommendedName>
    <component>
        <recommendedName>
            <fullName>Fusion glycoprotein F2</fullName>
        </recommendedName>
    </component>
    <component>
        <recommendedName>
            <fullName>Fusion glycoprotein F1</fullName>
        </recommendedName>
    </component>
</protein>
<organismHost>
    <name type="scientific">Phocidae</name>
    <name type="common">true seals</name>
    <dbReference type="NCBI Taxonomy" id="9709"/>
</organismHost>
<evidence type="ECO:0000250" key="1"/>
<evidence type="ECO:0000250" key="2">
    <source>
        <dbReference type="UniProtKB" id="Q786F3"/>
    </source>
</evidence>
<evidence type="ECO:0000255" key="3"/>
<evidence type="ECO:0000305" key="4"/>
<name>FUS_PHODV</name>